<reference key="1">
    <citation type="journal article" date="1991" name="Plasmid">
        <title>Organization of the agropine synthesis region of the T-DNA of the Ri plasmid from Agrobacterium rhizogenes.</title>
        <authorList>
            <person name="Bouchez D."/>
            <person name="Tourneur J."/>
        </authorList>
    </citation>
    <scope>NUCLEOTIDE SEQUENCE [GENOMIC DNA]</scope>
    <source>
        <strain>A4</strain>
    </source>
</reference>
<feature type="chain" id="PRO_0000107974" description="Probable opine utilization operon repressor">
    <location>
        <begin position="1" status="less than"/>
        <end position="198"/>
    </location>
</feature>
<feature type="non-terminal residue">
    <location>
        <position position="1"/>
    </location>
</feature>
<keyword id="KW-0238">DNA-binding</keyword>
<keyword id="KW-0614">Plasmid</keyword>
<keyword id="KW-0678">Repressor</keyword>
<keyword id="KW-0804">Transcription</keyword>
<keyword id="KW-0805">Transcription regulation</keyword>
<organism>
    <name type="scientific">Rhizobium rhizogenes</name>
    <name type="common">Agrobacterium rhizogenes</name>
    <dbReference type="NCBI Taxonomy" id="359"/>
    <lineage>
        <taxon>Bacteria</taxon>
        <taxon>Pseudomonadati</taxon>
        <taxon>Pseudomonadota</taxon>
        <taxon>Alphaproteobacteria</taxon>
        <taxon>Hyphomicrobiales</taxon>
        <taxon>Rhizobiaceae</taxon>
        <taxon>Rhizobium/Agrobacterium group</taxon>
        <taxon>Rhizobium</taxon>
    </lineage>
</organism>
<geneLocation type="plasmid">
    <name>pRiA4b</name>
</geneLocation>
<gene>
    <name type="primary">opnR</name>
</gene>
<accession>P27872</accession>
<name>OPNR_RHIRH</name>
<proteinExistence type="predicted"/>
<dbReference type="EMBL" id="X51338">
    <property type="protein sequence ID" value="CAA35720.1"/>
    <property type="molecule type" value="Genomic_DNA"/>
</dbReference>
<dbReference type="PIR" id="JQ1052">
    <property type="entry name" value="JQ1052"/>
</dbReference>
<dbReference type="SMR" id="P27872"/>
<dbReference type="UniPathway" id="UPA00736"/>
<dbReference type="GO" id="GO:0003700">
    <property type="term" value="F:DNA-binding transcription factor activity"/>
    <property type="evidence" value="ECO:0007669"/>
    <property type="project" value="TreeGrafter"/>
</dbReference>
<dbReference type="GO" id="GO:0000976">
    <property type="term" value="F:transcription cis-regulatory region binding"/>
    <property type="evidence" value="ECO:0007669"/>
    <property type="project" value="TreeGrafter"/>
</dbReference>
<dbReference type="CDD" id="cd06267">
    <property type="entry name" value="PBP1_LacI_sugar_binding-like"/>
    <property type="match status" value="1"/>
</dbReference>
<dbReference type="Gene3D" id="3.40.50.2300">
    <property type="match status" value="1"/>
</dbReference>
<dbReference type="InterPro" id="IPR046335">
    <property type="entry name" value="LacI/GalR-like_sensor"/>
</dbReference>
<dbReference type="InterPro" id="IPR028082">
    <property type="entry name" value="Peripla_BP_I"/>
</dbReference>
<dbReference type="PANTHER" id="PTHR30146:SF148">
    <property type="entry name" value="HTH-TYPE TRANSCRIPTIONAL REPRESSOR PURR-RELATED"/>
    <property type="match status" value="1"/>
</dbReference>
<dbReference type="PANTHER" id="PTHR30146">
    <property type="entry name" value="LACI-RELATED TRANSCRIPTIONAL REPRESSOR"/>
    <property type="match status" value="1"/>
</dbReference>
<dbReference type="Pfam" id="PF13377">
    <property type="entry name" value="Peripla_BP_3"/>
    <property type="match status" value="1"/>
</dbReference>
<dbReference type="SUPFAM" id="SSF53822">
    <property type="entry name" value="Periplasmic binding protein-like I"/>
    <property type="match status" value="1"/>
</dbReference>
<protein>
    <recommendedName>
        <fullName>Probable opine utilization operon repressor</fullName>
    </recommendedName>
</protein>
<sequence length="198" mass="21064">VDNFRAAHEAVTSLTGRGHRSIALVSNAPAQGEQQYLISSVRERIDGYRAALHDAQIKISPNLIVLGGWDTKNLADQVRALCISPNRPTAFLATDSSVALVLLGVLREMDLSIPDDVSLICFDDADWTSAITPPLTVISQPVRDLATAATEDLIARLKGETSAPPKETLLPAVLIERGSVSGSSQGRGCIPNSRNVGD</sequence>
<comment type="function">
    <text>Possible repressor for genes for mannityl-opine utilization and / or plasmid conjugative transfer.</text>
</comment>
<comment type="pathway">
    <text>Opine metabolism; mannopine biosynthesis [regulation].</text>
</comment>